<organism>
    <name type="scientific">Daucus carota</name>
    <name type="common">Wild carrot</name>
    <dbReference type="NCBI Taxonomy" id="4039"/>
    <lineage>
        <taxon>Eukaryota</taxon>
        <taxon>Viridiplantae</taxon>
        <taxon>Streptophyta</taxon>
        <taxon>Embryophyta</taxon>
        <taxon>Tracheophyta</taxon>
        <taxon>Spermatophyta</taxon>
        <taxon>Magnoliopsida</taxon>
        <taxon>eudicotyledons</taxon>
        <taxon>Gunneridae</taxon>
        <taxon>Pentapetalae</taxon>
        <taxon>asterids</taxon>
        <taxon>campanulids</taxon>
        <taxon>Apiales</taxon>
        <taxon>Apiaceae</taxon>
        <taxon>Apioideae</taxon>
        <taxon>Scandiceae</taxon>
        <taxon>Daucinae</taxon>
        <taxon>Daucus</taxon>
        <taxon>Daucus sect. Daucus</taxon>
    </lineage>
</organism>
<evidence type="ECO:0000255" key="1">
    <source>
        <dbReference type="PROSITE-ProRule" id="PRU10023"/>
    </source>
</evidence>
<evidence type="ECO:0000305" key="2"/>
<sequence>MVTVNEFRKAQRAEGPATVLAIGTATPPNCVDQSAYADYYFRITNSEDKPELKEKFRRMCEKSMINTRYMHLTEDLLKQNPSFCEYMASSLDARQDIVVNEVPKLGKEAALRAIKEWGRPKSKITHLIFCTTSGVDMPGADFRLTKLLGLRPSVKRFMMYQQGCFAGGTVLRLAKDLAENNKNARVLVVCSEITVITFRGPNDTHLDSLVGQALFGDGAGAVIVGSDPVIGIEKPLFEIVSAAQTILPDSDGAIDGHLREVGLTFHLLKDVPGLISKNIRKSLVEAFKPLGISDWNSIFWIAHPGGPAILDQVETELSLKPDKLKSTRQVLRDYGNMSSACVLFILDEMRNASAKDGHRTTGEGLDWGVLFGFGPGLTVETVVLHSVPT</sequence>
<dbReference type="EC" id="2.3.1.74"/>
<dbReference type="EMBL" id="D16256">
    <property type="protein sequence ID" value="BAA03785.1"/>
    <property type="molecule type" value="mRNA"/>
</dbReference>
<dbReference type="SMR" id="Q9SB26"/>
<dbReference type="UniPathway" id="UPA00154"/>
<dbReference type="GO" id="GO:0016210">
    <property type="term" value="F:naringenin-chalcone synthase activity"/>
    <property type="evidence" value="ECO:0007669"/>
    <property type="project" value="UniProtKB-EC"/>
</dbReference>
<dbReference type="GO" id="GO:0009813">
    <property type="term" value="P:flavonoid biosynthetic process"/>
    <property type="evidence" value="ECO:0007669"/>
    <property type="project" value="UniProtKB-UniPathway"/>
</dbReference>
<dbReference type="GO" id="GO:0030639">
    <property type="term" value="P:polyketide biosynthetic process"/>
    <property type="evidence" value="ECO:0007669"/>
    <property type="project" value="TreeGrafter"/>
</dbReference>
<dbReference type="CDD" id="cd00831">
    <property type="entry name" value="CHS_like"/>
    <property type="match status" value="1"/>
</dbReference>
<dbReference type="FunFam" id="3.40.47.10:FF:000014">
    <property type="entry name" value="Chalcone synthase 1"/>
    <property type="match status" value="1"/>
</dbReference>
<dbReference type="FunFam" id="3.40.47.10:FF:000025">
    <property type="entry name" value="Chalcone synthase 2"/>
    <property type="match status" value="1"/>
</dbReference>
<dbReference type="Gene3D" id="3.40.47.10">
    <property type="match status" value="2"/>
</dbReference>
<dbReference type="InterPro" id="IPR012328">
    <property type="entry name" value="Chalcone/stilbene_synt_C"/>
</dbReference>
<dbReference type="InterPro" id="IPR001099">
    <property type="entry name" value="Chalcone/stilbene_synt_N"/>
</dbReference>
<dbReference type="InterPro" id="IPR018088">
    <property type="entry name" value="Chalcone/stilbene_synthase_AS"/>
</dbReference>
<dbReference type="InterPro" id="IPR011141">
    <property type="entry name" value="Polyketide_synthase_type-III"/>
</dbReference>
<dbReference type="InterPro" id="IPR016039">
    <property type="entry name" value="Thiolase-like"/>
</dbReference>
<dbReference type="PANTHER" id="PTHR11877:SF80">
    <property type="entry name" value="CHALCONE SYNTHASE 1"/>
    <property type="match status" value="1"/>
</dbReference>
<dbReference type="PANTHER" id="PTHR11877">
    <property type="entry name" value="HYDROXYMETHYLGLUTARYL-COA SYNTHASE"/>
    <property type="match status" value="1"/>
</dbReference>
<dbReference type="Pfam" id="PF02797">
    <property type="entry name" value="Chal_sti_synt_C"/>
    <property type="match status" value="1"/>
</dbReference>
<dbReference type="Pfam" id="PF00195">
    <property type="entry name" value="Chal_sti_synt_N"/>
    <property type="match status" value="1"/>
</dbReference>
<dbReference type="PIRSF" id="PIRSF000451">
    <property type="entry name" value="PKS_III"/>
    <property type="match status" value="1"/>
</dbReference>
<dbReference type="SUPFAM" id="SSF53901">
    <property type="entry name" value="Thiolase-like"/>
    <property type="match status" value="2"/>
</dbReference>
<dbReference type="PROSITE" id="PS00441">
    <property type="entry name" value="CHALCONE_SYNTH"/>
    <property type="match status" value="1"/>
</dbReference>
<gene>
    <name type="primary">CHS9</name>
</gene>
<keyword id="KW-0012">Acyltransferase</keyword>
<keyword id="KW-0284">Flavonoid biosynthesis</keyword>
<keyword id="KW-0808">Transferase</keyword>
<name>CHS9_DAUCA</name>
<comment type="function">
    <text>The primary product of this enzyme is 4,2',4',6'-tetrahydroxychalcone (also termed naringenin-chalcone or chalcone) which can under specific conditions spontaneously isomerize into naringenin.</text>
</comment>
<comment type="catalytic activity">
    <reaction evidence="1">
        <text>(E)-4-coumaroyl-CoA + 3 malonyl-CoA + 3 H(+) = 2',4,4',6'-tetrahydroxychalcone + 3 CO2 + 4 CoA</text>
        <dbReference type="Rhea" id="RHEA:11128"/>
        <dbReference type="ChEBI" id="CHEBI:15378"/>
        <dbReference type="ChEBI" id="CHEBI:15413"/>
        <dbReference type="ChEBI" id="CHEBI:16526"/>
        <dbReference type="ChEBI" id="CHEBI:57287"/>
        <dbReference type="ChEBI" id="CHEBI:57384"/>
        <dbReference type="ChEBI" id="CHEBI:85008"/>
        <dbReference type="EC" id="2.3.1.74"/>
    </reaction>
</comment>
<comment type="pathway">
    <text>Secondary metabolite biosynthesis; flavonoid biosynthesis.</text>
</comment>
<comment type="similarity">
    <text evidence="2">Belongs to the thiolase-like superfamily. Chalcone/stilbene synthases family.</text>
</comment>
<proteinExistence type="evidence at transcript level"/>
<protein>
    <recommendedName>
        <fullName>Chalcone synthase 9</fullName>
        <ecNumber>2.3.1.74</ecNumber>
    </recommendedName>
    <alternativeName>
        <fullName>Naringenin-chalcone synthase 9</fullName>
    </alternativeName>
</protein>
<accession>Q9SB26</accession>
<reference key="1">
    <citation type="journal article" date="1993" name="Plant Cell Physiol.">
        <title>Structure and expression of chalcone synthase gene in carrot suspension cultured cells regulated by 2,4-D.</title>
        <authorList>
            <person name="Ozeki Y."/>
            <person name="Davies E."/>
            <person name="Takeda J."/>
        </authorList>
    </citation>
    <scope>NUCLEOTIDE SEQUENCE [MRNA]</scope>
    <source>
        <strain>cv. Kurodagosun</strain>
    </source>
</reference>
<feature type="chain" id="PRO_0000215972" description="Chalcone synthase 9">
    <location>
        <begin position="1"/>
        <end position="389"/>
    </location>
</feature>
<feature type="active site" evidence="1">
    <location>
        <position position="164"/>
    </location>
</feature>